<gene>
    <name evidence="1" type="primary">aat</name>
    <name type="ordered locus">GOX1657</name>
</gene>
<dbReference type="EC" id="2.3.2.6" evidence="1"/>
<dbReference type="EMBL" id="CP000009">
    <property type="protein sequence ID" value="AAW61398.1"/>
    <property type="status" value="ALT_INIT"/>
    <property type="molecule type" value="Genomic_DNA"/>
</dbReference>
<dbReference type="RefSeq" id="WP_024716936.1">
    <property type="nucleotide sequence ID" value="NC_006677.1"/>
</dbReference>
<dbReference type="SMR" id="Q5FQE8"/>
<dbReference type="STRING" id="290633.GOX1657"/>
<dbReference type="KEGG" id="gox:GOX1657"/>
<dbReference type="eggNOG" id="COG2360">
    <property type="taxonomic scope" value="Bacteria"/>
</dbReference>
<dbReference type="HOGENOM" id="CLU_075045_1_0_5"/>
<dbReference type="Proteomes" id="UP000006375">
    <property type="component" value="Chromosome"/>
</dbReference>
<dbReference type="GO" id="GO:0005737">
    <property type="term" value="C:cytoplasm"/>
    <property type="evidence" value="ECO:0007669"/>
    <property type="project" value="UniProtKB-SubCell"/>
</dbReference>
<dbReference type="GO" id="GO:0008914">
    <property type="term" value="F:leucyl-tRNA--protein transferase activity"/>
    <property type="evidence" value="ECO:0007669"/>
    <property type="project" value="UniProtKB-UniRule"/>
</dbReference>
<dbReference type="GO" id="GO:0030163">
    <property type="term" value="P:protein catabolic process"/>
    <property type="evidence" value="ECO:0007669"/>
    <property type="project" value="UniProtKB-UniRule"/>
</dbReference>
<dbReference type="Gene3D" id="3.40.630.70">
    <property type="entry name" value="Leucyl/phenylalanyl-tRNA-protein transferase, C-terminal domain"/>
    <property type="match status" value="1"/>
</dbReference>
<dbReference type="HAMAP" id="MF_00688">
    <property type="entry name" value="Leu_Phe_trans"/>
    <property type="match status" value="1"/>
</dbReference>
<dbReference type="InterPro" id="IPR016181">
    <property type="entry name" value="Acyl_CoA_acyltransferase"/>
</dbReference>
<dbReference type="InterPro" id="IPR004616">
    <property type="entry name" value="Leu/Phe-tRNA_Trfase"/>
</dbReference>
<dbReference type="InterPro" id="IPR042203">
    <property type="entry name" value="Leu/Phe-tRNA_Trfase_C"/>
</dbReference>
<dbReference type="NCBIfam" id="TIGR00667">
    <property type="entry name" value="aat"/>
    <property type="match status" value="1"/>
</dbReference>
<dbReference type="PANTHER" id="PTHR30098">
    <property type="entry name" value="LEUCYL/PHENYLALANYL-TRNA--PROTEIN TRANSFERASE"/>
    <property type="match status" value="1"/>
</dbReference>
<dbReference type="PANTHER" id="PTHR30098:SF2">
    <property type="entry name" value="LEUCYL_PHENYLALANYL-TRNA--PROTEIN TRANSFERASE"/>
    <property type="match status" value="1"/>
</dbReference>
<dbReference type="Pfam" id="PF03588">
    <property type="entry name" value="Leu_Phe_trans"/>
    <property type="match status" value="1"/>
</dbReference>
<dbReference type="SUPFAM" id="SSF55729">
    <property type="entry name" value="Acyl-CoA N-acyltransferases (Nat)"/>
    <property type="match status" value="1"/>
</dbReference>
<keyword id="KW-0012">Acyltransferase</keyword>
<keyword id="KW-0963">Cytoplasm</keyword>
<keyword id="KW-1185">Reference proteome</keyword>
<keyword id="KW-0808">Transferase</keyword>
<sequence>MDDITPDLLLRAYASGIFPMAPDAGSMELSWYLPEERGIMPLTGMHVPKKLMRLVMSGRMTVTADRAFDEVMRACAEPAPGRETTWISGRIRVLYGALHRQGNAHSIEVREGEKLVGGLYGVSLRGAFFGESMFSRERDASKVALVHLVAGLRKGRFTLLDTQYTTPHLTGLGGIGIPAADYQSLLHQALTVRAVWPDDFSLQALRESIASLRVPAGRTPAGDPP</sequence>
<accession>Q5FQE8</accession>
<organism>
    <name type="scientific">Gluconobacter oxydans (strain 621H)</name>
    <name type="common">Gluconobacter suboxydans</name>
    <dbReference type="NCBI Taxonomy" id="290633"/>
    <lineage>
        <taxon>Bacteria</taxon>
        <taxon>Pseudomonadati</taxon>
        <taxon>Pseudomonadota</taxon>
        <taxon>Alphaproteobacteria</taxon>
        <taxon>Acetobacterales</taxon>
        <taxon>Acetobacteraceae</taxon>
        <taxon>Gluconobacter</taxon>
    </lineage>
</organism>
<feature type="chain" id="PRO_0000258060" description="Leucyl/phenylalanyl-tRNA--protein transferase">
    <location>
        <begin position="1"/>
        <end position="225"/>
    </location>
</feature>
<reference key="1">
    <citation type="journal article" date="2005" name="Nat. Biotechnol.">
        <title>Complete genome sequence of the acetic acid bacterium Gluconobacter oxydans.</title>
        <authorList>
            <person name="Prust C."/>
            <person name="Hoffmeister M."/>
            <person name="Liesegang H."/>
            <person name="Wiezer A."/>
            <person name="Fricke W.F."/>
            <person name="Ehrenreich A."/>
            <person name="Gottschalk G."/>
            <person name="Deppenmeier U."/>
        </authorList>
    </citation>
    <scope>NUCLEOTIDE SEQUENCE [LARGE SCALE GENOMIC DNA]</scope>
    <source>
        <strain>621H</strain>
    </source>
</reference>
<name>LFTR_GLUOX</name>
<evidence type="ECO:0000255" key="1">
    <source>
        <dbReference type="HAMAP-Rule" id="MF_00688"/>
    </source>
</evidence>
<evidence type="ECO:0000305" key="2"/>
<proteinExistence type="inferred from homology"/>
<protein>
    <recommendedName>
        <fullName evidence="1">Leucyl/phenylalanyl-tRNA--protein transferase</fullName>
        <ecNumber evidence="1">2.3.2.6</ecNumber>
    </recommendedName>
    <alternativeName>
        <fullName evidence="1">L/F-transferase</fullName>
    </alternativeName>
    <alternativeName>
        <fullName evidence="1">Leucyltransferase</fullName>
    </alternativeName>
    <alternativeName>
        <fullName evidence="1">Phenyalanyltransferase</fullName>
    </alternativeName>
</protein>
<comment type="function">
    <text evidence="1">Functions in the N-end rule pathway of protein degradation where it conjugates Leu, Phe and, less efficiently, Met from aminoacyl-tRNAs to the N-termini of proteins containing an N-terminal arginine or lysine.</text>
</comment>
<comment type="catalytic activity">
    <reaction evidence="1">
        <text>N-terminal L-lysyl-[protein] + L-leucyl-tRNA(Leu) = N-terminal L-leucyl-L-lysyl-[protein] + tRNA(Leu) + H(+)</text>
        <dbReference type="Rhea" id="RHEA:12340"/>
        <dbReference type="Rhea" id="RHEA-COMP:9613"/>
        <dbReference type="Rhea" id="RHEA-COMP:9622"/>
        <dbReference type="Rhea" id="RHEA-COMP:12670"/>
        <dbReference type="Rhea" id="RHEA-COMP:12671"/>
        <dbReference type="ChEBI" id="CHEBI:15378"/>
        <dbReference type="ChEBI" id="CHEBI:65249"/>
        <dbReference type="ChEBI" id="CHEBI:78442"/>
        <dbReference type="ChEBI" id="CHEBI:78494"/>
        <dbReference type="ChEBI" id="CHEBI:133043"/>
        <dbReference type="EC" id="2.3.2.6"/>
    </reaction>
</comment>
<comment type="catalytic activity">
    <reaction evidence="1">
        <text>N-terminal L-arginyl-[protein] + L-leucyl-tRNA(Leu) = N-terminal L-leucyl-L-arginyl-[protein] + tRNA(Leu) + H(+)</text>
        <dbReference type="Rhea" id="RHEA:50416"/>
        <dbReference type="Rhea" id="RHEA-COMP:9613"/>
        <dbReference type="Rhea" id="RHEA-COMP:9622"/>
        <dbReference type="Rhea" id="RHEA-COMP:12672"/>
        <dbReference type="Rhea" id="RHEA-COMP:12673"/>
        <dbReference type="ChEBI" id="CHEBI:15378"/>
        <dbReference type="ChEBI" id="CHEBI:64719"/>
        <dbReference type="ChEBI" id="CHEBI:78442"/>
        <dbReference type="ChEBI" id="CHEBI:78494"/>
        <dbReference type="ChEBI" id="CHEBI:133044"/>
        <dbReference type="EC" id="2.3.2.6"/>
    </reaction>
</comment>
<comment type="catalytic activity">
    <reaction evidence="1">
        <text>L-phenylalanyl-tRNA(Phe) + an N-terminal L-alpha-aminoacyl-[protein] = an N-terminal L-phenylalanyl-L-alpha-aminoacyl-[protein] + tRNA(Phe)</text>
        <dbReference type="Rhea" id="RHEA:43632"/>
        <dbReference type="Rhea" id="RHEA-COMP:9668"/>
        <dbReference type="Rhea" id="RHEA-COMP:9699"/>
        <dbReference type="Rhea" id="RHEA-COMP:10636"/>
        <dbReference type="Rhea" id="RHEA-COMP:10637"/>
        <dbReference type="ChEBI" id="CHEBI:78442"/>
        <dbReference type="ChEBI" id="CHEBI:78531"/>
        <dbReference type="ChEBI" id="CHEBI:78597"/>
        <dbReference type="ChEBI" id="CHEBI:83561"/>
        <dbReference type="EC" id="2.3.2.6"/>
    </reaction>
</comment>
<comment type="subcellular location">
    <subcellularLocation>
        <location evidence="1">Cytoplasm</location>
    </subcellularLocation>
</comment>
<comment type="similarity">
    <text evidence="1">Belongs to the L/F-transferase family.</text>
</comment>
<comment type="sequence caution" evidence="2">
    <conflict type="erroneous initiation">
        <sequence resource="EMBL-CDS" id="AAW61398"/>
    </conflict>
</comment>